<gene>
    <name type="primary">icp55</name>
    <name type="ORF">SPAC12B10.05</name>
</gene>
<protein>
    <recommendedName>
        <fullName>Intermediate cleaving peptidase 55</fullName>
        <ecNumber evidence="1">3.4.11.26</ecNumber>
    </recommendedName>
</protein>
<organism>
    <name type="scientific">Schizosaccharomyces pombe (strain 972 / ATCC 24843)</name>
    <name type="common">Fission yeast</name>
    <dbReference type="NCBI Taxonomy" id="284812"/>
    <lineage>
        <taxon>Eukaryota</taxon>
        <taxon>Fungi</taxon>
        <taxon>Dikarya</taxon>
        <taxon>Ascomycota</taxon>
        <taxon>Taphrinomycotina</taxon>
        <taxon>Schizosaccharomycetes</taxon>
        <taxon>Schizosaccharomycetales</taxon>
        <taxon>Schizosaccharomycetaceae</taxon>
        <taxon>Schizosaccharomyces</taxon>
    </lineage>
</organism>
<name>ICP55_SCHPO</name>
<keyword id="KW-0031">Aminopeptidase</keyword>
<keyword id="KW-0378">Hydrolase</keyword>
<keyword id="KW-0464">Manganese</keyword>
<keyword id="KW-0472">Membrane</keyword>
<keyword id="KW-0479">Metal-binding</keyword>
<keyword id="KW-0482">Metalloprotease</keyword>
<keyword id="KW-0496">Mitochondrion</keyword>
<keyword id="KW-0999">Mitochondrion inner membrane</keyword>
<keyword id="KW-0645">Protease</keyword>
<keyword id="KW-1185">Reference proteome</keyword>
<keyword id="KW-0809">Transit peptide</keyword>
<dbReference type="EC" id="3.4.11.26" evidence="1"/>
<dbReference type="EMBL" id="CU329670">
    <property type="protein sequence ID" value="CAA94695.1"/>
    <property type="molecule type" value="Genomic_DNA"/>
</dbReference>
<dbReference type="PIR" id="T37572">
    <property type="entry name" value="T37572"/>
</dbReference>
<dbReference type="RefSeq" id="NP_594637.1">
    <property type="nucleotide sequence ID" value="NM_001020065.2"/>
</dbReference>
<dbReference type="SMR" id="Q10439"/>
<dbReference type="BioGRID" id="279392">
    <property type="interactions" value="5"/>
</dbReference>
<dbReference type="FunCoup" id="Q10439">
    <property type="interactions" value="418"/>
</dbReference>
<dbReference type="STRING" id="284812.Q10439"/>
<dbReference type="PaxDb" id="4896-SPAC12B10.05.1"/>
<dbReference type="EnsemblFungi" id="SPAC12B10.05.1">
    <property type="protein sequence ID" value="SPAC12B10.05.1:pep"/>
    <property type="gene ID" value="SPAC12B10.05"/>
</dbReference>
<dbReference type="GeneID" id="2542952"/>
<dbReference type="KEGG" id="spo:2542952"/>
<dbReference type="PomBase" id="SPAC12B10.05">
    <property type="gene designation" value="icp55"/>
</dbReference>
<dbReference type="VEuPathDB" id="FungiDB:SPAC12B10.05"/>
<dbReference type="eggNOG" id="KOG2414">
    <property type="taxonomic scope" value="Eukaryota"/>
</dbReference>
<dbReference type="HOGENOM" id="CLU_017266_1_1_1"/>
<dbReference type="InParanoid" id="Q10439"/>
<dbReference type="OMA" id="DSYFWYL"/>
<dbReference type="PhylomeDB" id="Q10439"/>
<dbReference type="PRO" id="PR:Q10439"/>
<dbReference type="Proteomes" id="UP000002485">
    <property type="component" value="Chromosome I"/>
</dbReference>
<dbReference type="GO" id="GO:0005743">
    <property type="term" value="C:mitochondrial inner membrane"/>
    <property type="evidence" value="ECO:0007669"/>
    <property type="project" value="UniProtKB-SubCell"/>
</dbReference>
<dbReference type="GO" id="GO:0005739">
    <property type="term" value="C:mitochondrion"/>
    <property type="evidence" value="ECO:0007005"/>
    <property type="project" value="PomBase"/>
</dbReference>
<dbReference type="GO" id="GO:0004177">
    <property type="term" value="F:aminopeptidase activity"/>
    <property type="evidence" value="ECO:0000318"/>
    <property type="project" value="GO_Central"/>
</dbReference>
<dbReference type="GO" id="GO:0030145">
    <property type="term" value="F:manganese ion binding"/>
    <property type="evidence" value="ECO:0007669"/>
    <property type="project" value="InterPro"/>
</dbReference>
<dbReference type="GO" id="GO:0070006">
    <property type="term" value="F:metalloaminopeptidase activity"/>
    <property type="evidence" value="ECO:0000255"/>
    <property type="project" value="PomBase"/>
</dbReference>
<dbReference type="GO" id="GO:0034982">
    <property type="term" value="P:mitochondrial protein processing"/>
    <property type="evidence" value="ECO:0000250"/>
    <property type="project" value="PomBase"/>
</dbReference>
<dbReference type="GO" id="GO:0007005">
    <property type="term" value="P:mitochondrion organization"/>
    <property type="evidence" value="ECO:0000305"/>
    <property type="project" value="PomBase"/>
</dbReference>
<dbReference type="GO" id="GO:0006508">
    <property type="term" value="P:proteolysis"/>
    <property type="evidence" value="ECO:0000318"/>
    <property type="project" value="GO_Central"/>
</dbReference>
<dbReference type="CDD" id="cd01087">
    <property type="entry name" value="Prolidase"/>
    <property type="match status" value="1"/>
</dbReference>
<dbReference type="Gene3D" id="3.90.230.10">
    <property type="entry name" value="Creatinase/methionine aminopeptidase superfamily"/>
    <property type="match status" value="1"/>
</dbReference>
<dbReference type="Gene3D" id="3.40.350.10">
    <property type="entry name" value="Creatinase/prolidase N-terminal domain"/>
    <property type="match status" value="1"/>
</dbReference>
<dbReference type="InterPro" id="IPR007865">
    <property type="entry name" value="Aminopep_P_N"/>
</dbReference>
<dbReference type="InterPro" id="IPR029149">
    <property type="entry name" value="Creatin/AminoP/Spt16_N"/>
</dbReference>
<dbReference type="InterPro" id="IPR036005">
    <property type="entry name" value="Creatinase/aminopeptidase-like"/>
</dbReference>
<dbReference type="InterPro" id="IPR000994">
    <property type="entry name" value="Pept_M24"/>
</dbReference>
<dbReference type="InterPro" id="IPR001131">
    <property type="entry name" value="Peptidase_M24B_aminopep-P_CS"/>
</dbReference>
<dbReference type="InterPro" id="IPR052433">
    <property type="entry name" value="X-Pro_dipept-like"/>
</dbReference>
<dbReference type="PANTHER" id="PTHR43226">
    <property type="entry name" value="XAA-PRO AMINOPEPTIDASE 3"/>
    <property type="match status" value="1"/>
</dbReference>
<dbReference type="PANTHER" id="PTHR43226:SF4">
    <property type="entry name" value="XAA-PRO AMINOPEPTIDASE 3"/>
    <property type="match status" value="1"/>
</dbReference>
<dbReference type="Pfam" id="PF05195">
    <property type="entry name" value="AMP_N"/>
    <property type="match status" value="1"/>
</dbReference>
<dbReference type="Pfam" id="PF00557">
    <property type="entry name" value="Peptidase_M24"/>
    <property type="match status" value="1"/>
</dbReference>
<dbReference type="SMART" id="SM01011">
    <property type="entry name" value="AMP_N"/>
    <property type="match status" value="1"/>
</dbReference>
<dbReference type="SUPFAM" id="SSF55920">
    <property type="entry name" value="Creatinase/aminopeptidase"/>
    <property type="match status" value="1"/>
</dbReference>
<dbReference type="SUPFAM" id="SSF53092">
    <property type="entry name" value="Creatinase/prolidase N-terminal domain"/>
    <property type="match status" value="1"/>
</dbReference>
<dbReference type="PROSITE" id="PS00491">
    <property type="entry name" value="PROLINE_PEPTIDASE"/>
    <property type="match status" value="1"/>
</dbReference>
<evidence type="ECO:0000250" key="1">
    <source>
        <dbReference type="UniProtKB" id="P40051"/>
    </source>
</evidence>
<evidence type="ECO:0000255" key="2"/>
<evidence type="ECO:0000269" key="3">
    <source>
    </source>
</evidence>
<evidence type="ECO:0000305" key="4"/>
<sequence length="486" mass="55141">MSGYIRTLFIRNRFSNYRLRSQIIKYKYSNVSYLNKSALRCGQATDSTHPHILQPGELTPRISAQEYKTRRDRVASLLEDNDFMIVTSAPVRHMCGAAFYEYHQDPNFYYLTGCLEPNAVLLMFKNGASGSYDCSLYLPSKNPYIEKWEGLRTGSTLGKKLFQIENVYDSSLASSVINALGKKSNRIFYNYQTGYLSKMPAASAPEFIQDTLTKLFRTSTQRSVDELLHPLRSIKSTAELECMKEAANISSNVYREIMRKRFEKEAEMSAEFNYRFCIGGCDRSAYVPVVAGGKNGLTIHYTINNDIFRPDEMVLVDAGGEFGGYVTDISRTWPINGKFSTVQRDLYQAVLNVQKKCIKYCCTSNGWSLADIHFESVKLMHEELKQVGIHGTKREITDILYPHSIGHEIGLEIHDCSTNNGYQPLRKNQVITIEPGLYVPEEDGWPQWAQGIAIRIEDSVIVGDDKPFVLTSAAPKEIEEIEALKK</sequence>
<comment type="function">
    <text evidence="1">Aminopeptidase which cleaves preprotein intermediates that carry destabilizing N-ter amino acid residues after the mitochondrial processing peptidase (MPP) cleavage site and is thus critical for stabilization of the mitochondrial proteome.</text>
</comment>
<comment type="catalytic activity">
    <reaction evidence="1">
        <text>The enzyme cleaves the 36-Pro-Pro-37 bond of cysteine desulfurase (EC 2.8.1.7) removing three amino acid residues (Tyr-Ser-Pro) from the N-terminus after cleavage by mitochondrial processing peptidase.</text>
        <dbReference type="EC" id="3.4.11.26"/>
    </reaction>
</comment>
<comment type="cofactor">
    <cofactor evidence="4">
        <name>Mn(2+)</name>
        <dbReference type="ChEBI" id="CHEBI:29035"/>
    </cofactor>
    <text evidence="4">Binds 2 manganese ions per subunit.</text>
</comment>
<comment type="subcellular location">
    <subcellularLocation>
        <location evidence="3">Mitochondrion inner membrane</location>
        <topology evidence="3">Peripheral membrane protein</topology>
        <orientation evidence="3">Matrix side</orientation>
    </subcellularLocation>
</comment>
<comment type="similarity">
    <text evidence="4">Belongs to the peptidase M24B family.</text>
</comment>
<proteinExistence type="inferred from homology"/>
<accession>Q10439</accession>
<feature type="transit peptide" description="Mitochondrion" evidence="2">
    <location>
        <begin position="1"/>
        <end position="19"/>
    </location>
</feature>
<feature type="chain" id="PRO_0000185096" description="Intermediate cleaving peptidase 55">
    <location>
        <begin position="20"/>
        <end position="486"/>
    </location>
</feature>
<feature type="binding site" evidence="2">
    <location>
        <position position="317"/>
    </location>
    <ligand>
        <name>Mn(2+)</name>
        <dbReference type="ChEBI" id="CHEBI:29035"/>
        <label>2</label>
    </ligand>
</feature>
<feature type="binding site" evidence="2">
    <location>
        <position position="328"/>
    </location>
    <ligand>
        <name>Mn(2+)</name>
        <dbReference type="ChEBI" id="CHEBI:29035"/>
        <label>1</label>
    </ligand>
</feature>
<feature type="binding site" evidence="2">
    <location>
        <position position="328"/>
    </location>
    <ligand>
        <name>Mn(2+)</name>
        <dbReference type="ChEBI" id="CHEBI:29035"/>
        <label>2</label>
    </ligand>
</feature>
<feature type="binding site" evidence="2">
    <location>
        <position position="407"/>
    </location>
    <ligand>
        <name>Mn(2+)</name>
        <dbReference type="ChEBI" id="CHEBI:29035"/>
        <label>1</label>
    </ligand>
</feature>
<feature type="binding site" evidence="2">
    <location>
        <position position="434"/>
    </location>
    <ligand>
        <name>Mn(2+)</name>
        <dbReference type="ChEBI" id="CHEBI:29035"/>
        <label>1</label>
    </ligand>
</feature>
<feature type="binding site" evidence="2">
    <location>
        <position position="457"/>
    </location>
    <ligand>
        <name>Mn(2+)</name>
        <dbReference type="ChEBI" id="CHEBI:29035"/>
        <label>1</label>
    </ligand>
</feature>
<feature type="binding site" evidence="2">
    <location>
        <position position="457"/>
    </location>
    <ligand>
        <name>Mn(2+)</name>
        <dbReference type="ChEBI" id="CHEBI:29035"/>
        <label>2</label>
    </ligand>
</feature>
<reference key="1">
    <citation type="journal article" date="2002" name="Nature">
        <title>The genome sequence of Schizosaccharomyces pombe.</title>
        <authorList>
            <person name="Wood V."/>
            <person name="Gwilliam R."/>
            <person name="Rajandream M.A."/>
            <person name="Lyne M.H."/>
            <person name="Lyne R."/>
            <person name="Stewart A."/>
            <person name="Sgouros J.G."/>
            <person name="Peat N."/>
            <person name="Hayles J."/>
            <person name="Baker S.G."/>
            <person name="Basham D."/>
            <person name="Bowman S."/>
            <person name="Brooks K."/>
            <person name="Brown D."/>
            <person name="Brown S."/>
            <person name="Chillingworth T."/>
            <person name="Churcher C.M."/>
            <person name="Collins M."/>
            <person name="Connor R."/>
            <person name="Cronin A."/>
            <person name="Davis P."/>
            <person name="Feltwell T."/>
            <person name="Fraser A."/>
            <person name="Gentles S."/>
            <person name="Goble A."/>
            <person name="Hamlin N."/>
            <person name="Harris D.E."/>
            <person name="Hidalgo J."/>
            <person name="Hodgson G."/>
            <person name="Holroyd S."/>
            <person name="Hornsby T."/>
            <person name="Howarth S."/>
            <person name="Huckle E.J."/>
            <person name="Hunt S."/>
            <person name="Jagels K."/>
            <person name="James K.D."/>
            <person name="Jones L."/>
            <person name="Jones M."/>
            <person name="Leather S."/>
            <person name="McDonald S."/>
            <person name="McLean J."/>
            <person name="Mooney P."/>
            <person name="Moule S."/>
            <person name="Mungall K.L."/>
            <person name="Murphy L.D."/>
            <person name="Niblett D."/>
            <person name="Odell C."/>
            <person name="Oliver K."/>
            <person name="O'Neil S."/>
            <person name="Pearson D."/>
            <person name="Quail M.A."/>
            <person name="Rabbinowitsch E."/>
            <person name="Rutherford K.M."/>
            <person name="Rutter S."/>
            <person name="Saunders D."/>
            <person name="Seeger K."/>
            <person name="Sharp S."/>
            <person name="Skelton J."/>
            <person name="Simmonds M.N."/>
            <person name="Squares R."/>
            <person name="Squares S."/>
            <person name="Stevens K."/>
            <person name="Taylor K."/>
            <person name="Taylor R.G."/>
            <person name="Tivey A."/>
            <person name="Walsh S.V."/>
            <person name="Warren T."/>
            <person name="Whitehead S."/>
            <person name="Woodward J.R."/>
            <person name="Volckaert G."/>
            <person name="Aert R."/>
            <person name="Robben J."/>
            <person name="Grymonprez B."/>
            <person name="Weltjens I."/>
            <person name="Vanstreels E."/>
            <person name="Rieger M."/>
            <person name="Schaefer M."/>
            <person name="Mueller-Auer S."/>
            <person name="Gabel C."/>
            <person name="Fuchs M."/>
            <person name="Duesterhoeft A."/>
            <person name="Fritzc C."/>
            <person name="Holzer E."/>
            <person name="Moestl D."/>
            <person name="Hilbert H."/>
            <person name="Borzym K."/>
            <person name="Langer I."/>
            <person name="Beck A."/>
            <person name="Lehrach H."/>
            <person name="Reinhardt R."/>
            <person name="Pohl T.M."/>
            <person name="Eger P."/>
            <person name="Zimmermann W."/>
            <person name="Wedler H."/>
            <person name="Wambutt R."/>
            <person name="Purnelle B."/>
            <person name="Goffeau A."/>
            <person name="Cadieu E."/>
            <person name="Dreano S."/>
            <person name="Gloux S."/>
            <person name="Lelaure V."/>
            <person name="Mottier S."/>
            <person name="Galibert F."/>
            <person name="Aves S.J."/>
            <person name="Xiang Z."/>
            <person name="Hunt C."/>
            <person name="Moore K."/>
            <person name="Hurst S.M."/>
            <person name="Lucas M."/>
            <person name="Rochet M."/>
            <person name="Gaillardin C."/>
            <person name="Tallada V.A."/>
            <person name="Garzon A."/>
            <person name="Thode G."/>
            <person name="Daga R.R."/>
            <person name="Cruzado L."/>
            <person name="Jimenez J."/>
            <person name="Sanchez M."/>
            <person name="del Rey F."/>
            <person name="Benito J."/>
            <person name="Dominguez A."/>
            <person name="Revuelta J.L."/>
            <person name="Moreno S."/>
            <person name="Armstrong J."/>
            <person name="Forsburg S.L."/>
            <person name="Cerutti L."/>
            <person name="Lowe T."/>
            <person name="McCombie W.R."/>
            <person name="Paulsen I."/>
            <person name="Potashkin J."/>
            <person name="Shpakovski G.V."/>
            <person name="Ussery D."/>
            <person name="Barrell B.G."/>
            <person name="Nurse P."/>
        </authorList>
    </citation>
    <scope>NUCLEOTIDE SEQUENCE [LARGE SCALE GENOMIC DNA]</scope>
    <source>
        <strain>972 / ATCC 24843</strain>
    </source>
</reference>
<reference key="2">
    <citation type="journal article" date="2006" name="Nat. Biotechnol.">
        <title>ORFeome cloning and global analysis of protein localization in the fission yeast Schizosaccharomyces pombe.</title>
        <authorList>
            <person name="Matsuyama A."/>
            <person name="Arai R."/>
            <person name="Yashiroda Y."/>
            <person name="Shirai A."/>
            <person name="Kamata A."/>
            <person name="Sekido S."/>
            <person name="Kobayashi Y."/>
            <person name="Hashimoto A."/>
            <person name="Hamamoto M."/>
            <person name="Hiraoka Y."/>
            <person name="Horinouchi S."/>
            <person name="Yoshida M."/>
        </authorList>
    </citation>
    <scope>SUBCELLULAR LOCATION [LARGE SCALE ANALYSIS]</scope>
</reference>